<keyword id="KW-1185">Reference proteome</keyword>
<keyword id="KW-0732">Signal</keyword>
<accession>O51059</accession>
<reference key="1">
    <citation type="journal article" date="1997" name="Nature">
        <title>Genomic sequence of a Lyme disease spirochaete, Borrelia burgdorferi.</title>
        <authorList>
            <person name="Fraser C.M."/>
            <person name="Casjens S."/>
            <person name="Huang W.M."/>
            <person name="Sutton G.G."/>
            <person name="Clayton R.A."/>
            <person name="Lathigra R."/>
            <person name="White O."/>
            <person name="Ketchum K.A."/>
            <person name="Dodson R.J."/>
            <person name="Hickey E.K."/>
            <person name="Gwinn M.L."/>
            <person name="Dougherty B.A."/>
            <person name="Tomb J.-F."/>
            <person name="Fleischmann R.D."/>
            <person name="Richardson D.L."/>
            <person name="Peterson J.D."/>
            <person name="Kerlavage A.R."/>
            <person name="Quackenbush J."/>
            <person name="Salzberg S.L."/>
            <person name="Hanson M."/>
            <person name="van Vugt R."/>
            <person name="Palmer N."/>
            <person name="Adams M.D."/>
            <person name="Gocayne J.D."/>
            <person name="Weidman J.F."/>
            <person name="Utterback T.R."/>
            <person name="Watthey L."/>
            <person name="McDonald L.A."/>
            <person name="Artiach P."/>
            <person name="Bowman C."/>
            <person name="Garland S.A."/>
            <person name="Fujii C."/>
            <person name="Cotton M.D."/>
            <person name="Horst K."/>
            <person name="Roberts K.M."/>
            <person name="Hatch B."/>
            <person name="Smith H.O."/>
            <person name="Venter J.C."/>
        </authorList>
    </citation>
    <scope>NUCLEOTIDE SEQUENCE [LARGE SCALE GENOMIC DNA]</scope>
    <source>
        <strain>ATCC 35210 / DSM 4680 / CIP 102532 / B31</strain>
    </source>
</reference>
<gene>
    <name type="ordered locus">BB_0028</name>
</gene>
<protein>
    <recommendedName>
        <fullName>Uncharacterized protein BB_0028</fullName>
    </recommendedName>
</protein>
<feature type="signal peptide" evidence="1">
    <location>
        <begin position="1"/>
        <end position="29"/>
    </location>
</feature>
<feature type="chain" id="PRO_0000013749" description="Uncharacterized protein BB_0028">
    <location>
        <begin position="30"/>
        <end position="349"/>
    </location>
</feature>
<sequence>MKQKYENYFKKRLILNLLIFLLLACSSESIFSQLGNLQKIKHEYNILGSSSPRGISLVGETLYIAAMHLFKKENGKIEKIDLSNSYEFINDIVNISGKTYLLAQNKEEELEVCELNGKDWTLKFKKPLKAYKFLKSVGRDGVKEAYILAIDKNNREKIFDLQGSDKTPPQATENDKFYQISNEENLITGNSLKIWQMNNNTYTNIDYQQAKEIMPIIKTSIRGSSEVLVMTGGYNNLDTKFKVYSNTNNYTTPIFIQDEVGEFSSYFAREFNDAILIGSNNGFAEFTKNKEGIFALRAPSKSVEPGAYNGSQLSKTGLNDIIPVSNNTIYILTQGKGLWKLENRKLTKE</sequence>
<organism>
    <name type="scientific">Borreliella burgdorferi (strain ATCC 35210 / DSM 4680 / CIP 102532 / B31)</name>
    <name type="common">Borrelia burgdorferi</name>
    <dbReference type="NCBI Taxonomy" id="224326"/>
    <lineage>
        <taxon>Bacteria</taxon>
        <taxon>Pseudomonadati</taxon>
        <taxon>Spirochaetota</taxon>
        <taxon>Spirochaetia</taxon>
        <taxon>Spirochaetales</taxon>
        <taxon>Borreliaceae</taxon>
        <taxon>Borreliella</taxon>
    </lineage>
</organism>
<name>Y028_BORBU</name>
<proteinExistence type="inferred from homology"/>
<dbReference type="EMBL" id="AE000783">
    <property type="protein sequence ID" value="AAC66428.1"/>
    <property type="molecule type" value="Genomic_DNA"/>
</dbReference>
<dbReference type="PIR" id="D70103">
    <property type="entry name" value="D70103"/>
</dbReference>
<dbReference type="RefSeq" id="NP_212162.1">
    <property type="nucleotide sequence ID" value="NC_001318.1"/>
</dbReference>
<dbReference type="STRING" id="224326.BB_0028"/>
<dbReference type="PaxDb" id="224326-BB_0028"/>
<dbReference type="EnsemblBacteria" id="AAC66428">
    <property type="protein sequence ID" value="AAC66428"/>
    <property type="gene ID" value="BB_0028"/>
</dbReference>
<dbReference type="KEGG" id="bbu:BB_0028"/>
<dbReference type="PATRIC" id="fig|224326.49.peg.427"/>
<dbReference type="HOGENOM" id="CLU_069545_0_0_12"/>
<dbReference type="OrthoDB" id="350340at2"/>
<dbReference type="Proteomes" id="UP000001807">
    <property type="component" value="Chromosome"/>
</dbReference>
<dbReference type="PROSITE" id="PS51257">
    <property type="entry name" value="PROKAR_LIPOPROTEIN"/>
    <property type="match status" value="1"/>
</dbReference>
<evidence type="ECO:0000255" key="1">
    <source>
        <dbReference type="PROSITE-ProRule" id="PRU00303"/>
    </source>
</evidence>